<protein>
    <recommendedName>
        <fullName>Calmodulin</fullName>
        <shortName>CaM</shortName>
    </recommendedName>
</protein>
<accession>P41041</accession>
<comment type="function">
    <text>Calmodulin mediates the control of a large number of enzymes, ion channels and other proteins by Ca(2+). Among the enzymes to be stimulated by the calmodulin-Ca(2+) complex are a number of protein kinases and phosphatases.</text>
</comment>
<comment type="miscellaneous">
    <text>This protein has four functional calcium-binding sites.</text>
</comment>
<comment type="similarity">
    <text evidence="2">Belongs to the calmodulin family.</text>
</comment>
<feature type="chain" id="PRO_0000198326" description="Calmodulin">
    <location>
        <begin position="1"/>
        <end position="151"/>
    </location>
</feature>
<feature type="domain" description="EF-hand 1" evidence="1">
    <location>
        <begin position="10"/>
        <end position="45"/>
    </location>
</feature>
<feature type="domain" description="EF-hand 2" evidence="1">
    <location>
        <begin position="46"/>
        <end position="81"/>
    </location>
</feature>
<feature type="domain" description="EF-hand 3" evidence="1">
    <location>
        <begin position="83"/>
        <end position="118"/>
    </location>
</feature>
<feature type="domain" description="EF-hand 4" evidence="1">
    <location>
        <begin position="119"/>
        <end position="151"/>
    </location>
</feature>
<feature type="binding site" evidence="1">
    <location>
        <position position="23"/>
    </location>
    <ligand>
        <name>Ca(2+)</name>
        <dbReference type="ChEBI" id="CHEBI:29108"/>
        <label>1</label>
    </ligand>
</feature>
<feature type="binding site" evidence="1">
    <location>
        <position position="25"/>
    </location>
    <ligand>
        <name>Ca(2+)</name>
        <dbReference type="ChEBI" id="CHEBI:29108"/>
        <label>1</label>
    </ligand>
</feature>
<feature type="binding site" evidence="1">
    <location>
        <position position="27"/>
    </location>
    <ligand>
        <name>Ca(2+)</name>
        <dbReference type="ChEBI" id="CHEBI:29108"/>
        <label>1</label>
    </ligand>
</feature>
<feature type="binding site" evidence="1">
    <location>
        <position position="29"/>
    </location>
    <ligand>
        <name>Ca(2+)</name>
        <dbReference type="ChEBI" id="CHEBI:29108"/>
        <label>1</label>
    </ligand>
</feature>
<feature type="binding site" evidence="1">
    <location>
        <position position="34"/>
    </location>
    <ligand>
        <name>Ca(2+)</name>
        <dbReference type="ChEBI" id="CHEBI:29108"/>
        <label>1</label>
    </ligand>
</feature>
<feature type="binding site" evidence="1">
    <location>
        <position position="59"/>
    </location>
    <ligand>
        <name>Ca(2+)</name>
        <dbReference type="ChEBI" id="CHEBI:29108"/>
        <label>2</label>
    </ligand>
</feature>
<feature type="binding site" evidence="1">
    <location>
        <position position="61"/>
    </location>
    <ligand>
        <name>Ca(2+)</name>
        <dbReference type="ChEBI" id="CHEBI:29108"/>
        <label>2</label>
    </ligand>
</feature>
<feature type="binding site" evidence="1">
    <location>
        <position position="63"/>
    </location>
    <ligand>
        <name>Ca(2+)</name>
        <dbReference type="ChEBI" id="CHEBI:29108"/>
        <label>2</label>
    </ligand>
</feature>
<feature type="binding site" evidence="1">
    <location>
        <position position="65"/>
    </location>
    <ligand>
        <name>Ca(2+)</name>
        <dbReference type="ChEBI" id="CHEBI:29108"/>
        <label>2</label>
    </ligand>
</feature>
<feature type="binding site" evidence="1">
    <location>
        <position position="70"/>
    </location>
    <ligand>
        <name>Ca(2+)</name>
        <dbReference type="ChEBI" id="CHEBI:29108"/>
        <label>2</label>
    </ligand>
</feature>
<feature type="binding site" evidence="1">
    <location>
        <position position="96"/>
    </location>
    <ligand>
        <name>Ca(2+)</name>
        <dbReference type="ChEBI" id="CHEBI:29108"/>
        <label>3</label>
    </ligand>
</feature>
<feature type="binding site" evidence="1">
    <location>
        <position position="98"/>
    </location>
    <ligand>
        <name>Ca(2+)</name>
        <dbReference type="ChEBI" id="CHEBI:29108"/>
        <label>3</label>
    </ligand>
</feature>
<feature type="binding site" evidence="1">
    <location>
        <position position="100"/>
    </location>
    <ligand>
        <name>Ca(2+)</name>
        <dbReference type="ChEBI" id="CHEBI:29108"/>
        <label>3</label>
    </ligand>
</feature>
<feature type="binding site" evidence="1">
    <location>
        <position position="107"/>
    </location>
    <ligand>
        <name>Ca(2+)</name>
        <dbReference type="ChEBI" id="CHEBI:29108"/>
        <label>3</label>
    </ligand>
</feature>
<feature type="binding site" evidence="1">
    <location>
        <position position="132"/>
    </location>
    <ligand>
        <name>Ca(2+)</name>
        <dbReference type="ChEBI" id="CHEBI:29108"/>
        <label>4</label>
    </ligand>
</feature>
<feature type="binding site" evidence="1">
    <location>
        <position position="134"/>
    </location>
    <ligand>
        <name>Ca(2+)</name>
        <dbReference type="ChEBI" id="CHEBI:29108"/>
        <label>4</label>
    </ligand>
</feature>
<feature type="binding site" evidence="1">
    <location>
        <position position="136"/>
    </location>
    <ligand>
        <name>Ca(2+)</name>
        <dbReference type="ChEBI" id="CHEBI:29108"/>
        <label>4</label>
    </ligand>
</feature>
<feature type="binding site" evidence="1">
    <location>
        <position position="143"/>
    </location>
    <ligand>
        <name>Ca(2+)</name>
        <dbReference type="ChEBI" id="CHEBI:29108"/>
        <label>4</label>
    </ligand>
</feature>
<sequence length="151" mass="16944">MSNEQNLTEEQISEFKEAFSLFDKDGDGSITTKELGIVMRSLGQNPTEAELQDMVNEVDADGNGTIDFPEFLAMMARKMKDVDSEEEIREAFKVFDKDGNGIISAAELRHVMTNLGEKLTDEEVDEMIREADVDGDGVIDYSEFVKMMLSK</sequence>
<organism>
    <name type="scientific">Pneumocystis carinii</name>
    <dbReference type="NCBI Taxonomy" id="4754"/>
    <lineage>
        <taxon>Eukaryota</taxon>
        <taxon>Fungi</taxon>
        <taxon>Dikarya</taxon>
        <taxon>Ascomycota</taxon>
        <taxon>Taphrinomycotina</taxon>
        <taxon>Pneumocystomycetes</taxon>
        <taxon>Pneumocystaceae</taxon>
        <taxon>Pneumocystis</taxon>
    </lineage>
</organism>
<reference key="1">
    <citation type="journal article" date="1993" name="Gene">
        <title>Cloning and characterization of the calmodulin-encoding gene from Pneumocystis carinii.</title>
        <authorList>
            <person name="Fletcher L.D."/>
            <person name="Berger L.C."/>
            <person name="Tidwell R.R."/>
            <person name="Dykstra C.C."/>
        </authorList>
    </citation>
    <scope>NUCLEOTIDE SEQUENCE [GENOMIC DNA]</scope>
</reference>
<reference key="2">
    <citation type="journal article" date="1993" name="Gene">
        <title>Isolation and identification of six Pneumocystis carinii genes utilizing codon bias.</title>
        <authorList>
            <person name="Fletcher L.D."/>
            <person name="Berger L.C."/>
            <person name="Peel S.A."/>
            <person name="Baric R.S."/>
            <person name="Tidwell R.R."/>
            <person name="Dykstra C.C."/>
        </authorList>
    </citation>
    <scope>NUCLEOTIDE SEQUENCE [GENOMIC DNA] OF 43-117</scope>
</reference>
<name>CALM_PNECA</name>
<dbReference type="EMBL" id="L05572">
    <property type="protein sequence ID" value="AAA02582.1"/>
    <property type="molecule type" value="Unassigned_DNA"/>
</dbReference>
<dbReference type="EMBL" id="M96933">
    <property type="protein sequence ID" value="AAA02567.1"/>
    <property type="molecule type" value="Unassigned_DNA"/>
</dbReference>
<dbReference type="PIR" id="JN0722">
    <property type="entry name" value="JN0722"/>
</dbReference>
<dbReference type="SMR" id="P41041"/>
<dbReference type="VEuPathDB" id="FungiDB:T552_01676"/>
<dbReference type="GO" id="GO:0016460">
    <property type="term" value="C:myosin II complex"/>
    <property type="evidence" value="ECO:0007669"/>
    <property type="project" value="TreeGrafter"/>
</dbReference>
<dbReference type="GO" id="GO:0005509">
    <property type="term" value="F:calcium ion binding"/>
    <property type="evidence" value="ECO:0007669"/>
    <property type="project" value="InterPro"/>
</dbReference>
<dbReference type="CDD" id="cd00051">
    <property type="entry name" value="EFh"/>
    <property type="match status" value="2"/>
</dbReference>
<dbReference type="FunFam" id="1.10.238.10:FF:000527">
    <property type="entry name" value="Calmodulin-3"/>
    <property type="match status" value="1"/>
</dbReference>
<dbReference type="Gene3D" id="1.10.238.10">
    <property type="entry name" value="EF-hand"/>
    <property type="match status" value="3"/>
</dbReference>
<dbReference type="InterPro" id="IPR050230">
    <property type="entry name" value="CALM/Myosin/TropC-like"/>
</dbReference>
<dbReference type="InterPro" id="IPR011992">
    <property type="entry name" value="EF-hand-dom_pair"/>
</dbReference>
<dbReference type="InterPro" id="IPR018247">
    <property type="entry name" value="EF_Hand_1_Ca_BS"/>
</dbReference>
<dbReference type="InterPro" id="IPR002048">
    <property type="entry name" value="EF_hand_dom"/>
</dbReference>
<dbReference type="PANTHER" id="PTHR23048:SF0">
    <property type="entry name" value="CALMODULIN LIKE 3"/>
    <property type="match status" value="1"/>
</dbReference>
<dbReference type="PANTHER" id="PTHR23048">
    <property type="entry name" value="MYOSIN LIGHT CHAIN 1, 3"/>
    <property type="match status" value="1"/>
</dbReference>
<dbReference type="Pfam" id="PF13499">
    <property type="entry name" value="EF-hand_7"/>
    <property type="match status" value="2"/>
</dbReference>
<dbReference type="SMART" id="SM00054">
    <property type="entry name" value="EFh"/>
    <property type="match status" value="4"/>
</dbReference>
<dbReference type="SUPFAM" id="SSF47473">
    <property type="entry name" value="EF-hand"/>
    <property type="match status" value="1"/>
</dbReference>
<dbReference type="PROSITE" id="PS00018">
    <property type="entry name" value="EF_HAND_1"/>
    <property type="match status" value="4"/>
</dbReference>
<dbReference type="PROSITE" id="PS50222">
    <property type="entry name" value="EF_HAND_2"/>
    <property type="match status" value="4"/>
</dbReference>
<evidence type="ECO:0000255" key="1">
    <source>
        <dbReference type="PROSITE-ProRule" id="PRU00448"/>
    </source>
</evidence>
<evidence type="ECO:0000305" key="2"/>
<proteinExistence type="inferred from homology"/>
<keyword id="KW-0106">Calcium</keyword>
<keyword id="KW-0479">Metal-binding</keyword>
<keyword id="KW-0677">Repeat</keyword>